<proteinExistence type="evidence at protein level"/>
<feature type="chain" id="PRO_0000081797" description="RNA-binding protein 1">
    <location>
        <begin position="1"/>
        <end position="144"/>
    </location>
</feature>
<feature type="domain" description="RRM" evidence="1">
    <location>
        <begin position="11"/>
        <end position="84"/>
    </location>
</feature>
<feature type="region of interest" description="Disordered" evidence="2">
    <location>
        <begin position="78"/>
        <end position="115"/>
    </location>
</feature>
<feature type="splice variant" id="VSP_011815" description="In isoform A." evidence="7">
    <original>ITPSARTTSTATSSFYNINNLQQQPSSQPQPATFNLQL</original>
    <variation>SRSPRRSRSPRSRSFSRDRRSRSDSRDRH</variation>
    <location>
        <begin position="107"/>
        <end position="144"/>
    </location>
</feature>
<feature type="sequence conflict" description="In Ref. 5; AAB24622/AAB24631." evidence="7" ref="5">
    <original>Y</original>
    <variation>F</variation>
    <location>
        <position position="14"/>
    </location>
</feature>
<feature type="sequence conflict" description="In Ref. 5; AAB24631." evidence="7" ref="5">
    <original>GSSASKHEIEG</original>
    <variation>APRRSKPRDRS</variation>
    <location>
        <begin position="19"/>
        <end position="29"/>
    </location>
</feature>
<feature type="sequence conflict" description="In Ref. 1; AAA28850." evidence="7" ref="1">
    <original>R</original>
    <variation>A</variation>
    <location>
        <position position="65"/>
    </location>
</feature>
<evidence type="ECO:0000255" key="1">
    <source>
        <dbReference type="PROSITE-ProRule" id="PRU00176"/>
    </source>
</evidence>
<evidence type="ECO:0000256" key="2">
    <source>
        <dbReference type="SAM" id="MobiDB-lite"/>
    </source>
</evidence>
<evidence type="ECO:0000269" key="3">
    <source>
    </source>
</evidence>
<evidence type="ECO:0000269" key="4">
    <source>
    </source>
</evidence>
<evidence type="ECO:0000269" key="5">
    <source>
    </source>
</evidence>
<evidence type="ECO:0000269" key="6">
    <source>
    </source>
</evidence>
<evidence type="ECO:0000305" key="7"/>
<accession>Q02427</accession>
<accession>A4V2P0</accession>
<accession>Q26271</accession>
<accession>Q26280</accession>
<accession>Q8T9K6</accession>
<accession>Q9VGW8</accession>
<gene>
    <name type="primary">Rbp1</name>
    <name type="synonym">Rbp11</name>
    <name type="ORF">CG17136</name>
</gene>
<sequence>MPRYREWDLACKVYVGNLGSSASKHEIEGAFAKYGPLRNVWVARNPPGFAFVEFEDRRDAEDATRALDGTRCCGTRIRVEMSSGRSRDRRRGEGGSSGRSGSGRYRITPSARTTSTATSSFYNINNLQQQPSSQPQPATFNLQL</sequence>
<organism>
    <name type="scientific">Drosophila melanogaster</name>
    <name type="common">Fruit fly</name>
    <dbReference type="NCBI Taxonomy" id="7227"/>
    <lineage>
        <taxon>Eukaryota</taxon>
        <taxon>Metazoa</taxon>
        <taxon>Ecdysozoa</taxon>
        <taxon>Arthropoda</taxon>
        <taxon>Hexapoda</taxon>
        <taxon>Insecta</taxon>
        <taxon>Pterygota</taxon>
        <taxon>Neoptera</taxon>
        <taxon>Endopterygota</taxon>
        <taxon>Diptera</taxon>
        <taxon>Brachycera</taxon>
        <taxon>Muscomorpha</taxon>
        <taxon>Ephydroidea</taxon>
        <taxon>Drosophilidae</taxon>
        <taxon>Drosophila</taxon>
        <taxon>Sophophora</taxon>
    </lineage>
</organism>
<keyword id="KW-0025">Alternative splicing</keyword>
<keyword id="KW-0507">mRNA processing</keyword>
<keyword id="KW-0508">mRNA splicing</keyword>
<keyword id="KW-0539">Nucleus</keyword>
<keyword id="KW-0597">Phosphoprotein</keyword>
<keyword id="KW-1185">Reference proteome</keyword>
<keyword id="KW-0694">RNA-binding</keyword>
<name>RBP1_DROME</name>
<protein>
    <recommendedName>
        <fullName>RNA-binding protein 1</fullName>
    </recommendedName>
</protein>
<comment type="function">
    <text evidence="3 6">Contributes to the activation of female-specific DSX splicing in vivo by recognizing the RBP1 target sequences within the purine-rich polypyrimidine tract of the female-specific 3' splice site.</text>
</comment>
<comment type="subunit">
    <text evidence="4">Interacts with x16 (via Arg/Ser-rich region).</text>
</comment>
<comment type="subcellular location">
    <subcellularLocation>
        <location evidence="3">Nucleus</location>
    </subcellularLocation>
</comment>
<comment type="alternative products">
    <event type="alternative splicing"/>
    <isoform>
        <id>Q02427-3</id>
        <name>D</name>
        <sequence type="displayed"/>
    </isoform>
    <isoform>
        <id>Q02427-1</id>
        <name>A</name>
        <name>RBP1-A</name>
        <name>C</name>
        <sequence type="described" ref="VSP_011815"/>
    </isoform>
</comment>
<comment type="tissue specificity">
    <text evidence="3">Ubiquitous.</text>
</comment>
<comment type="developmental stage">
    <text evidence="3">Found at all developmental stages.</text>
</comment>
<comment type="PTM">
    <text evidence="7">Extensively phosphorylated on serine residues in the RS domain.</text>
</comment>
<comment type="PTM">
    <text evidence="5">The tandem heptapeptide repeats in the C-terminal domain (CTD) can be highly phosphorylated (PubMed:32966759). The phosphorylation activates Pol II (PubMed:32966759). Phosphorylation occurs at residues 'Ser-2', 'Ser-5' and 'Ser-7' of the heptapeptide repeat and is mediated by P-TEFb (PubMed:32966759). Dephosphorylated by the INTAC complex when transcripts are unfavorably configured for transcriptional elongation, leading to premature transcription termination: dephosphorylation is mediated by the mts/PP2A component of the INTAC complex (PubMed:32966759).</text>
</comment>
<comment type="similarity">
    <text evidence="7">Belongs to the splicing factor SR family.</text>
</comment>
<dbReference type="EMBL" id="L04929">
    <property type="protein sequence ID" value="AAA28850.1"/>
    <property type="molecule type" value="Genomic_DNA"/>
</dbReference>
<dbReference type="EMBL" id="AE014297">
    <property type="protein sequence ID" value="AAF54555.1"/>
    <property type="molecule type" value="Genomic_DNA"/>
</dbReference>
<dbReference type="EMBL" id="AE014297">
    <property type="protein sequence ID" value="AAN13487.1"/>
    <property type="molecule type" value="Genomic_DNA"/>
</dbReference>
<dbReference type="EMBL" id="AY069252">
    <property type="protein sequence ID" value="AAL39397.1"/>
    <property type="molecule type" value="mRNA"/>
</dbReference>
<dbReference type="EMBL" id="S51691">
    <property type="protein sequence ID" value="AAB24622.1"/>
    <property type="molecule type" value="mRNA"/>
</dbReference>
<dbReference type="EMBL" id="S51740">
    <property type="protein sequence ID" value="AAB24631.1"/>
    <property type="molecule type" value="mRNA"/>
</dbReference>
<dbReference type="PIR" id="A46398">
    <property type="entry name" value="A46398"/>
</dbReference>
<dbReference type="PIR" id="A47752">
    <property type="entry name" value="A47752"/>
</dbReference>
<dbReference type="PIR" id="A48110">
    <property type="entry name" value="A48110"/>
</dbReference>
<dbReference type="RefSeq" id="NP_524307.1">
    <molecule id="Q02427-1"/>
    <property type="nucleotide sequence ID" value="NM_079583.3"/>
</dbReference>
<dbReference type="RefSeq" id="NP_731510.1">
    <molecule id="Q02427-3"/>
    <property type="nucleotide sequence ID" value="NM_169364.3"/>
</dbReference>
<dbReference type="SMR" id="Q02427"/>
<dbReference type="BioGRID" id="66438">
    <property type="interactions" value="16"/>
</dbReference>
<dbReference type="FunCoup" id="Q02427">
    <property type="interactions" value="592"/>
</dbReference>
<dbReference type="IntAct" id="Q02427">
    <property type="interactions" value="9"/>
</dbReference>
<dbReference type="STRING" id="7227.FBpp0081754"/>
<dbReference type="GlyGen" id="Q02427">
    <property type="glycosylation" value="1 site"/>
</dbReference>
<dbReference type="PaxDb" id="7227-FBpp0081754"/>
<dbReference type="DNASU" id="41294"/>
<dbReference type="EnsemblMetazoa" id="FBtr0082275">
    <molecule id="Q02427-1"/>
    <property type="protein sequence ID" value="FBpp0081752"/>
    <property type="gene ID" value="FBgn0260944"/>
</dbReference>
<dbReference type="EnsemblMetazoa" id="FBtr0082277">
    <molecule id="Q02427-3"/>
    <property type="protein sequence ID" value="FBpp0081754"/>
    <property type="gene ID" value="FBgn0260944"/>
</dbReference>
<dbReference type="GeneID" id="41294"/>
<dbReference type="KEGG" id="dme:Dmel_CG17136"/>
<dbReference type="AGR" id="FB:FBgn0260944"/>
<dbReference type="CTD" id="5947"/>
<dbReference type="FlyBase" id="FBgn0260944">
    <property type="gene designation" value="Rbp1"/>
</dbReference>
<dbReference type="VEuPathDB" id="VectorBase:FBgn0260944"/>
<dbReference type="eggNOG" id="KOG0107">
    <property type="taxonomic scope" value="Eukaryota"/>
</dbReference>
<dbReference type="GeneTree" id="ENSGT00910000144115"/>
<dbReference type="InParanoid" id="Q02427"/>
<dbReference type="OMA" id="MICNARI"/>
<dbReference type="OrthoDB" id="5970at2759"/>
<dbReference type="PhylomeDB" id="Q02427"/>
<dbReference type="Reactome" id="R-DME-159236">
    <property type="pathway name" value="Transport of Mature mRNA derived from an Intron-Containing Transcript"/>
</dbReference>
<dbReference type="Reactome" id="R-DME-72163">
    <property type="pathway name" value="mRNA Splicing - Major Pathway"/>
</dbReference>
<dbReference type="Reactome" id="R-DME-72187">
    <property type="pathway name" value="mRNA 3'-end processing"/>
</dbReference>
<dbReference type="Reactome" id="R-DME-72203">
    <property type="pathway name" value="Processing of Capped Intron-Containing Pre-mRNA"/>
</dbReference>
<dbReference type="Reactome" id="R-DME-73856">
    <property type="pathway name" value="RNA Polymerase II Transcription Termination"/>
</dbReference>
<dbReference type="BioGRID-ORCS" id="41294">
    <property type="hits" value="0 hits in 3 CRISPR screens"/>
</dbReference>
<dbReference type="GenomeRNAi" id="41294"/>
<dbReference type="PRO" id="PR:Q02427"/>
<dbReference type="Proteomes" id="UP000000803">
    <property type="component" value="Chromosome 3R"/>
</dbReference>
<dbReference type="Bgee" id="FBgn0260944">
    <property type="expression patterns" value="Expressed in male accessory gland secondary cell (Drosophila) in male reproductive gland and 283 other cell types or tissues"/>
</dbReference>
<dbReference type="ExpressionAtlas" id="Q02427">
    <property type="expression patterns" value="baseline and differential"/>
</dbReference>
<dbReference type="GO" id="GO:0000791">
    <property type="term" value="C:euchromatin"/>
    <property type="evidence" value="ECO:0000314"/>
    <property type="project" value="FlyBase"/>
</dbReference>
<dbReference type="GO" id="GO:0016607">
    <property type="term" value="C:nuclear speck"/>
    <property type="evidence" value="ECO:0000318"/>
    <property type="project" value="GO_Central"/>
</dbReference>
<dbReference type="GO" id="GO:0005634">
    <property type="term" value="C:nucleus"/>
    <property type="evidence" value="ECO:0000314"/>
    <property type="project" value="FlyBase"/>
</dbReference>
<dbReference type="GO" id="GO:0003729">
    <property type="term" value="F:mRNA binding"/>
    <property type="evidence" value="ECO:0000314"/>
    <property type="project" value="FlyBase"/>
</dbReference>
<dbReference type="GO" id="GO:0045292">
    <property type="term" value="P:mRNA cis splicing, via spliceosome"/>
    <property type="evidence" value="ECO:0000314"/>
    <property type="project" value="FlyBase"/>
</dbReference>
<dbReference type="GO" id="GO:0000381">
    <property type="term" value="P:regulation of alternative mRNA splicing, via spliceosome"/>
    <property type="evidence" value="ECO:0000315"/>
    <property type="project" value="FlyBase"/>
</dbReference>
<dbReference type="GO" id="GO:0010468">
    <property type="term" value="P:regulation of gene expression"/>
    <property type="evidence" value="ECO:0000315"/>
    <property type="project" value="FlyBase"/>
</dbReference>
<dbReference type="GO" id="GO:0031440">
    <property type="term" value="P:regulation of mRNA 3'-end processing"/>
    <property type="evidence" value="ECO:0000315"/>
    <property type="project" value="FlyBase"/>
</dbReference>
<dbReference type="GO" id="GO:0001178">
    <property type="term" value="P:regulation of transcriptional start site selection at RNA polymerase II promoter"/>
    <property type="evidence" value="ECO:0000315"/>
    <property type="project" value="FlyBase"/>
</dbReference>
<dbReference type="GO" id="GO:0008380">
    <property type="term" value="P:RNA splicing"/>
    <property type="evidence" value="ECO:0000315"/>
    <property type="project" value="FlyBase"/>
</dbReference>
<dbReference type="CDD" id="cd12373">
    <property type="entry name" value="RRM_SRSF3_like"/>
    <property type="match status" value="1"/>
</dbReference>
<dbReference type="FunFam" id="3.30.70.330:FF:000788">
    <property type="entry name" value="Rbp1-like, isoform B"/>
    <property type="match status" value="1"/>
</dbReference>
<dbReference type="Gene3D" id="3.30.70.330">
    <property type="match status" value="1"/>
</dbReference>
<dbReference type="InterPro" id="IPR012677">
    <property type="entry name" value="Nucleotide-bd_a/b_plait_sf"/>
</dbReference>
<dbReference type="InterPro" id="IPR035979">
    <property type="entry name" value="RBD_domain_sf"/>
</dbReference>
<dbReference type="InterPro" id="IPR000504">
    <property type="entry name" value="RRM_dom"/>
</dbReference>
<dbReference type="InterPro" id="IPR050907">
    <property type="entry name" value="SRSF"/>
</dbReference>
<dbReference type="PANTHER" id="PTHR23147">
    <property type="entry name" value="SERINE/ARGININE RICH SPLICING FACTOR"/>
    <property type="match status" value="1"/>
</dbReference>
<dbReference type="Pfam" id="PF00076">
    <property type="entry name" value="RRM_1"/>
    <property type="match status" value="1"/>
</dbReference>
<dbReference type="SMART" id="SM00360">
    <property type="entry name" value="RRM"/>
    <property type="match status" value="1"/>
</dbReference>
<dbReference type="SUPFAM" id="SSF54928">
    <property type="entry name" value="RNA-binding domain, RBD"/>
    <property type="match status" value="1"/>
</dbReference>
<dbReference type="PROSITE" id="PS50102">
    <property type="entry name" value="RRM"/>
    <property type="match status" value="1"/>
</dbReference>
<reference key="1">
    <citation type="journal article" date="1992" name="Genes Dev.">
        <title>The Drosophila RNA-binding protein RBP1 is localized to transcriptionally active sites of chromosomes and shows a functional similarity to human splicing factor ASF/SF2.</title>
        <authorList>
            <person name="Kim Y.-J."/>
            <person name="Zuo P."/>
            <person name="Manley J.L."/>
            <person name="Baker B.S."/>
        </authorList>
    </citation>
    <scope>NUCLEOTIDE SEQUENCE [GENOMIC DNA]</scope>
    <scope>FUNCTION</scope>
    <scope>SUBCELLULAR LOCATION</scope>
    <scope>TISSUE SPECIFICITY</scope>
    <scope>DEVELOPMENTAL STAGE</scope>
</reference>
<reference key="2">
    <citation type="journal article" date="2000" name="Science">
        <title>The genome sequence of Drosophila melanogaster.</title>
        <authorList>
            <person name="Adams M.D."/>
            <person name="Celniker S.E."/>
            <person name="Holt R.A."/>
            <person name="Evans C.A."/>
            <person name="Gocayne J.D."/>
            <person name="Amanatides P.G."/>
            <person name="Scherer S.E."/>
            <person name="Li P.W."/>
            <person name="Hoskins R.A."/>
            <person name="Galle R.F."/>
            <person name="George R.A."/>
            <person name="Lewis S.E."/>
            <person name="Richards S."/>
            <person name="Ashburner M."/>
            <person name="Henderson S.N."/>
            <person name="Sutton G.G."/>
            <person name="Wortman J.R."/>
            <person name="Yandell M.D."/>
            <person name="Zhang Q."/>
            <person name="Chen L.X."/>
            <person name="Brandon R.C."/>
            <person name="Rogers Y.-H.C."/>
            <person name="Blazej R.G."/>
            <person name="Champe M."/>
            <person name="Pfeiffer B.D."/>
            <person name="Wan K.H."/>
            <person name="Doyle C."/>
            <person name="Baxter E.G."/>
            <person name="Helt G."/>
            <person name="Nelson C.R."/>
            <person name="Miklos G.L.G."/>
            <person name="Abril J.F."/>
            <person name="Agbayani A."/>
            <person name="An H.-J."/>
            <person name="Andrews-Pfannkoch C."/>
            <person name="Baldwin D."/>
            <person name="Ballew R.M."/>
            <person name="Basu A."/>
            <person name="Baxendale J."/>
            <person name="Bayraktaroglu L."/>
            <person name="Beasley E.M."/>
            <person name="Beeson K.Y."/>
            <person name="Benos P.V."/>
            <person name="Berman B.P."/>
            <person name="Bhandari D."/>
            <person name="Bolshakov S."/>
            <person name="Borkova D."/>
            <person name="Botchan M.R."/>
            <person name="Bouck J."/>
            <person name="Brokstein P."/>
            <person name="Brottier P."/>
            <person name="Burtis K.C."/>
            <person name="Busam D.A."/>
            <person name="Butler H."/>
            <person name="Cadieu E."/>
            <person name="Center A."/>
            <person name="Chandra I."/>
            <person name="Cherry J.M."/>
            <person name="Cawley S."/>
            <person name="Dahlke C."/>
            <person name="Davenport L.B."/>
            <person name="Davies P."/>
            <person name="de Pablos B."/>
            <person name="Delcher A."/>
            <person name="Deng Z."/>
            <person name="Mays A.D."/>
            <person name="Dew I."/>
            <person name="Dietz S.M."/>
            <person name="Dodson K."/>
            <person name="Doup L.E."/>
            <person name="Downes M."/>
            <person name="Dugan-Rocha S."/>
            <person name="Dunkov B.C."/>
            <person name="Dunn P."/>
            <person name="Durbin K.J."/>
            <person name="Evangelista C.C."/>
            <person name="Ferraz C."/>
            <person name="Ferriera S."/>
            <person name="Fleischmann W."/>
            <person name="Fosler C."/>
            <person name="Gabrielian A.E."/>
            <person name="Garg N.S."/>
            <person name="Gelbart W.M."/>
            <person name="Glasser K."/>
            <person name="Glodek A."/>
            <person name="Gong F."/>
            <person name="Gorrell J.H."/>
            <person name="Gu Z."/>
            <person name="Guan P."/>
            <person name="Harris M."/>
            <person name="Harris N.L."/>
            <person name="Harvey D.A."/>
            <person name="Heiman T.J."/>
            <person name="Hernandez J.R."/>
            <person name="Houck J."/>
            <person name="Hostin D."/>
            <person name="Houston K.A."/>
            <person name="Howland T.J."/>
            <person name="Wei M.-H."/>
            <person name="Ibegwam C."/>
            <person name="Jalali M."/>
            <person name="Kalush F."/>
            <person name="Karpen G.H."/>
            <person name="Ke Z."/>
            <person name="Kennison J.A."/>
            <person name="Ketchum K.A."/>
            <person name="Kimmel B.E."/>
            <person name="Kodira C.D."/>
            <person name="Kraft C.L."/>
            <person name="Kravitz S."/>
            <person name="Kulp D."/>
            <person name="Lai Z."/>
            <person name="Lasko P."/>
            <person name="Lei Y."/>
            <person name="Levitsky A.A."/>
            <person name="Li J.H."/>
            <person name="Li Z."/>
            <person name="Liang Y."/>
            <person name="Lin X."/>
            <person name="Liu X."/>
            <person name="Mattei B."/>
            <person name="McIntosh T.C."/>
            <person name="McLeod M.P."/>
            <person name="McPherson D."/>
            <person name="Merkulov G."/>
            <person name="Milshina N.V."/>
            <person name="Mobarry C."/>
            <person name="Morris J."/>
            <person name="Moshrefi A."/>
            <person name="Mount S.M."/>
            <person name="Moy M."/>
            <person name="Murphy B."/>
            <person name="Murphy L."/>
            <person name="Muzny D.M."/>
            <person name="Nelson D.L."/>
            <person name="Nelson D.R."/>
            <person name="Nelson K.A."/>
            <person name="Nixon K."/>
            <person name="Nusskern D.R."/>
            <person name="Pacleb J.M."/>
            <person name="Palazzolo M."/>
            <person name="Pittman G.S."/>
            <person name="Pan S."/>
            <person name="Pollard J."/>
            <person name="Puri V."/>
            <person name="Reese M.G."/>
            <person name="Reinert K."/>
            <person name="Remington K."/>
            <person name="Saunders R.D.C."/>
            <person name="Scheeler F."/>
            <person name="Shen H."/>
            <person name="Shue B.C."/>
            <person name="Siden-Kiamos I."/>
            <person name="Simpson M."/>
            <person name="Skupski M.P."/>
            <person name="Smith T.J."/>
            <person name="Spier E."/>
            <person name="Spradling A.C."/>
            <person name="Stapleton M."/>
            <person name="Strong R."/>
            <person name="Sun E."/>
            <person name="Svirskas R."/>
            <person name="Tector C."/>
            <person name="Turner R."/>
            <person name="Venter E."/>
            <person name="Wang A.H."/>
            <person name="Wang X."/>
            <person name="Wang Z.-Y."/>
            <person name="Wassarman D.A."/>
            <person name="Weinstock G.M."/>
            <person name="Weissenbach J."/>
            <person name="Williams S.M."/>
            <person name="Woodage T."/>
            <person name="Worley K.C."/>
            <person name="Wu D."/>
            <person name="Yang S."/>
            <person name="Yao Q.A."/>
            <person name="Ye J."/>
            <person name="Yeh R.-F."/>
            <person name="Zaveri J.S."/>
            <person name="Zhan M."/>
            <person name="Zhang G."/>
            <person name="Zhao Q."/>
            <person name="Zheng L."/>
            <person name="Zheng X.H."/>
            <person name="Zhong F.N."/>
            <person name="Zhong W."/>
            <person name="Zhou X."/>
            <person name="Zhu S.C."/>
            <person name="Zhu X."/>
            <person name="Smith H.O."/>
            <person name="Gibbs R.A."/>
            <person name="Myers E.W."/>
            <person name="Rubin G.M."/>
            <person name="Venter J.C."/>
        </authorList>
    </citation>
    <scope>NUCLEOTIDE SEQUENCE [LARGE SCALE GENOMIC DNA]</scope>
    <source>
        <strain>Berkeley</strain>
    </source>
</reference>
<reference key="3">
    <citation type="journal article" date="2002" name="Genome Biol.">
        <title>Annotation of the Drosophila melanogaster euchromatic genome: a systematic review.</title>
        <authorList>
            <person name="Misra S."/>
            <person name="Crosby M.A."/>
            <person name="Mungall C.J."/>
            <person name="Matthews B.B."/>
            <person name="Campbell K.S."/>
            <person name="Hradecky P."/>
            <person name="Huang Y."/>
            <person name="Kaminker J.S."/>
            <person name="Millburn G.H."/>
            <person name="Prochnik S.E."/>
            <person name="Smith C.D."/>
            <person name="Tupy J.L."/>
            <person name="Whitfield E.J."/>
            <person name="Bayraktaroglu L."/>
            <person name="Berman B.P."/>
            <person name="Bettencourt B.R."/>
            <person name="Celniker S.E."/>
            <person name="de Grey A.D.N.J."/>
            <person name="Drysdale R.A."/>
            <person name="Harris N.L."/>
            <person name="Richter J."/>
            <person name="Russo S."/>
            <person name="Schroeder A.J."/>
            <person name="Shu S.Q."/>
            <person name="Stapleton M."/>
            <person name="Yamada C."/>
            <person name="Ashburner M."/>
            <person name="Gelbart W.M."/>
            <person name="Rubin G.M."/>
            <person name="Lewis S.E."/>
        </authorList>
    </citation>
    <scope>GENOME REANNOTATION</scope>
    <source>
        <strain>Berkeley</strain>
    </source>
</reference>
<reference key="4">
    <citation type="journal article" date="2002" name="Genome Biol.">
        <title>A Drosophila full-length cDNA resource.</title>
        <authorList>
            <person name="Stapleton M."/>
            <person name="Carlson J.W."/>
            <person name="Brokstein P."/>
            <person name="Yu C."/>
            <person name="Champe M."/>
            <person name="George R.A."/>
            <person name="Guarin H."/>
            <person name="Kronmiller B."/>
            <person name="Pacleb J.M."/>
            <person name="Park S."/>
            <person name="Wan K.H."/>
            <person name="Rubin G.M."/>
            <person name="Celniker S.E."/>
        </authorList>
    </citation>
    <scope>NUCLEOTIDE SEQUENCE [LARGE SCALE MRNA] (ISOFORM D)</scope>
    <source>
        <strain>Berkeley</strain>
        <tissue>Ovary</tissue>
    </source>
</reference>
<reference key="5">
    <citation type="journal article" date="1993" name="Mol. Cell. Biol.">
        <title>Isolation of RRM-type RNA-binding protein genes and the analysis of their relatedness by using a numerical approach.</title>
        <authorList>
            <person name="Kim Y.-J."/>
            <person name="Baker B.S."/>
        </authorList>
    </citation>
    <scope>NUCLEOTIDE SEQUENCE [MRNA] OF 14-52 (ISOFORMS A/D)</scope>
</reference>
<reference key="6">
    <citation type="journal article" date="1995" name="EMBO J.">
        <title>The Drosophila SR protein RBP1 contributes to the regulation of doublesex alternative splicing by recognizing RBP1 RNA target sequences.</title>
        <authorList>
            <person name="Heinrichs V."/>
            <person name="Baker B.S."/>
        </authorList>
    </citation>
    <scope>FUNCTION</scope>
</reference>
<reference key="7">
    <citation type="journal article" date="2008" name="Mol. Cell. Biochem.">
        <title>DX16 is a novel SR protein phosphorylated by DOA.</title>
        <authorList>
            <person name="Wan Y."/>
            <person name="Sun M."/>
            <person name="Wang S."/>
            <person name="Liu L."/>
            <person name="Yuan L."/>
            <person name="Xie W."/>
        </authorList>
    </citation>
    <scope>INTERACTION WITH X16</scope>
</reference>
<reference key="8">
    <citation type="journal article" date="2020" name="Mol. Cell">
        <title>Integrator recruits protein phosphatase 2A to prevent pause release and facilitate transcription termination.</title>
        <authorList>
            <person name="Huang K.L."/>
            <person name="Jee D."/>
            <person name="Stein C.B."/>
            <person name="Elrod N.D."/>
            <person name="Henriques T."/>
            <person name="Mascibroda L.G."/>
            <person name="Baillat D."/>
            <person name="Russell W.K."/>
            <person name="Adelman K."/>
            <person name="Wagner E.J."/>
        </authorList>
    </citation>
    <scope>DEPHOSPHORYLATION BY THE INTAC COMPLEX</scope>
</reference>